<reference key="1">
    <citation type="journal article" date="1989" name="J. Bacteriol.">
        <title>A Bacillus cereus cytolytic determinant, cereolysin AB, which comprises the phospholipase C and sphingomyelinase genes: nucleotide sequence and genetic linkage.</title>
        <authorList>
            <person name="Gilmore M.S."/>
            <person name="Cruz-Rodz A.L."/>
            <person name="Leimeister-Waechter M."/>
            <person name="Kreft J."/>
            <person name="Goebel W."/>
        </authorList>
    </citation>
    <scope>NUCLEOTIDE SEQUENCE [GENOMIC DNA]</scope>
    <source>
        <strain>GP-4</strain>
    </source>
</reference>
<reference key="2">
    <citation type="journal article" date="1985" name="Gene Anal. Tech.">
        <title>A new strategy for ordered DNA sequencing based on a novel method for the rapid purification of near-milligram quantities of a cloned restriction fragment.</title>
        <authorList>
            <person name="Gilmore M.S."/>
            <person name="Gilmore K.S."/>
            <person name="Goebel W."/>
        </authorList>
    </citation>
    <scope>NUCLEOTIDE SEQUENCE [GENOMIC DNA] OF 50-142</scope>
</reference>
<gene>
    <name type="primary">cerA</name>
</gene>
<feature type="signal peptide" evidence="2">
    <location>
        <begin position="1"/>
        <end position="24"/>
    </location>
</feature>
<feature type="propeptide" id="PRO_0000023929" evidence="1">
    <location>
        <begin position="25"/>
        <end position="38"/>
    </location>
</feature>
<feature type="chain" id="PRO_0000023930" description="Phospholipase C">
    <location>
        <begin position="39"/>
        <end position="283"/>
    </location>
</feature>
<feature type="domain" description="Zn-dependent PLC" evidence="3">
    <location>
        <begin position="39"/>
        <end position="283"/>
    </location>
</feature>
<feature type="binding site">
    <location>
        <position position="39"/>
    </location>
    <ligand>
        <name>Zn(2+)</name>
        <dbReference type="ChEBI" id="CHEBI:29105"/>
        <label>3</label>
    </ligand>
</feature>
<feature type="binding site">
    <location>
        <position position="52"/>
    </location>
    <ligand>
        <name>Zn(2+)</name>
        <dbReference type="ChEBI" id="CHEBI:29105"/>
        <label>3</label>
    </ligand>
</feature>
<feature type="binding site">
    <location>
        <position position="93"/>
    </location>
    <ligand>
        <name>Zn(2+)</name>
        <dbReference type="ChEBI" id="CHEBI:29105"/>
        <label>1</label>
    </ligand>
</feature>
<feature type="binding site">
    <location>
        <position position="107"/>
    </location>
    <ligand>
        <name>Zn(2+)</name>
        <dbReference type="ChEBI" id="CHEBI:29105"/>
        <label>1</label>
    </ligand>
</feature>
<feature type="binding site">
    <location>
        <position position="156"/>
    </location>
    <ligand>
        <name>Zn(2+)</name>
        <dbReference type="ChEBI" id="CHEBI:29105"/>
        <label>1</label>
    </ligand>
</feature>
<feature type="binding site">
    <location>
        <position position="160"/>
    </location>
    <ligand>
        <name>Zn(2+)</name>
        <dbReference type="ChEBI" id="CHEBI:29105"/>
        <label>1</label>
    </ligand>
</feature>
<feature type="binding site">
    <location>
        <position position="160"/>
    </location>
    <ligand>
        <name>Zn(2+)</name>
        <dbReference type="ChEBI" id="CHEBI:29105"/>
        <label>3</label>
    </ligand>
</feature>
<feature type="binding site">
    <location>
        <position position="166"/>
    </location>
    <ligand>
        <name>Zn(2+)</name>
        <dbReference type="ChEBI" id="CHEBI:29105"/>
        <label>2</label>
    </ligand>
</feature>
<feature type="binding site">
    <location>
        <position position="180"/>
    </location>
    <ligand>
        <name>Zn(2+)</name>
        <dbReference type="ChEBI" id="CHEBI:29105"/>
        <label>2</label>
    </ligand>
</feature>
<feature type="binding site">
    <location>
        <position position="184"/>
    </location>
    <ligand>
        <name>Zn(2+)</name>
        <dbReference type="ChEBI" id="CHEBI:29105"/>
        <label>2</label>
    </ligand>
</feature>
<proteinExistence type="inferred from homology"/>
<accession>P33376</accession>
<keyword id="KW-0204">Cytolysis</keyword>
<keyword id="KW-0354">Hemolysis</keyword>
<keyword id="KW-0378">Hydrolase</keyword>
<keyword id="KW-0479">Metal-binding</keyword>
<keyword id="KW-0732">Signal</keyword>
<keyword id="KW-0862">Zinc</keyword>
<keyword id="KW-0865">Zymogen</keyword>
<evidence type="ECO:0000250" key="1"/>
<evidence type="ECO:0000255" key="2"/>
<evidence type="ECO:0000255" key="3">
    <source>
        <dbReference type="PROSITE-ProRule" id="PRU00678"/>
    </source>
</evidence>
<dbReference type="EC" id="3.1.4.3"/>
<dbReference type="EMBL" id="M24149">
    <property type="protein sequence ID" value="AAA91819.1"/>
    <property type="molecule type" value="Genomic_DNA"/>
</dbReference>
<dbReference type="EMBL" id="M35411">
    <property type="protein sequence ID" value="AAA22524.1"/>
    <property type="molecule type" value="Genomic_DNA"/>
</dbReference>
<dbReference type="PIR" id="S18978">
    <property type="entry name" value="PS0197"/>
</dbReference>
<dbReference type="SMR" id="P33376"/>
<dbReference type="GO" id="GO:0034480">
    <property type="term" value="F:phosphatidylcholine phospholipase C activity"/>
    <property type="evidence" value="ECO:0007669"/>
    <property type="project" value="UniProtKB-EC"/>
</dbReference>
<dbReference type="GO" id="GO:0008270">
    <property type="term" value="F:zinc ion binding"/>
    <property type="evidence" value="ECO:0007669"/>
    <property type="project" value="InterPro"/>
</dbReference>
<dbReference type="GO" id="GO:0031640">
    <property type="term" value="P:killing of cells of another organism"/>
    <property type="evidence" value="ECO:0007669"/>
    <property type="project" value="UniProtKB-KW"/>
</dbReference>
<dbReference type="CDD" id="cd11009">
    <property type="entry name" value="Zn_dep_PLPC"/>
    <property type="match status" value="1"/>
</dbReference>
<dbReference type="FunFam" id="1.10.575.10:FF:000001">
    <property type="entry name" value="Phospholipase C"/>
    <property type="match status" value="1"/>
</dbReference>
<dbReference type="Gene3D" id="1.10.575.10">
    <property type="entry name" value="P1 Nuclease"/>
    <property type="match status" value="1"/>
</dbReference>
<dbReference type="InterPro" id="IPR008947">
    <property type="entry name" value="PLipase_C/P1_nuclease_dom_sf"/>
</dbReference>
<dbReference type="InterPro" id="IPR029002">
    <property type="entry name" value="PLPC/GPLD1"/>
</dbReference>
<dbReference type="InterPro" id="IPR001531">
    <property type="entry name" value="Zn_PLipaseC"/>
</dbReference>
<dbReference type="Pfam" id="PF00882">
    <property type="entry name" value="Zn_dep_PLPC"/>
    <property type="match status" value="1"/>
</dbReference>
<dbReference type="PRINTS" id="PR00479">
    <property type="entry name" value="PRPHPHLPASEC"/>
</dbReference>
<dbReference type="SMART" id="SM00770">
    <property type="entry name" value="Zn_dep_PLPC"/>
    <property type="match status" value="1"/>
</dbReference>
<dbReference type="SUPFAM" id="SSF48537">
    <property type="entry name" value="Phospholipase C/P1 nuclease"/>
    <property type="match status" value="1"/>
</dbReference>
<dbReference type="PROSITE" id="PS00384">
    <property type="entry name" value="PROKAR_ZN_DEPEND_PLPC_1"/>
    <property type="match status" value="1"/>
</dbReference>
<dbReference type="PROSITE" id="PS51346">
    <property type="entry name" value="PROKAR_ZN_DEPEND_PLPC_2"/>
    <property type="match status" value="1"/>
</dbReference>
<name>PHLD_BACCE</name>
<sequence>MKKKVLALGAAITLVAPLQSVAFAHENDGGQRFGVIPRWSAEDKHKEGVNSHLWIVNRAIDIMSRNTTLVKQDRVALLNEWRTELENGIYAADYENPYYDNSTFASHFYDPDNGKTYIPYAKQAKETGAKYFKLAGESYKNKDMKQAFFYLGLSLHYLGDVNQPMHAANFTNLSYPQGFHSKYENFVDTIKDNYKVTDGNGYWNWKGTNPEDWIHGAAVVAKQDYAGIVNDNTKDWFVRAAVSQEYADKWRAEVTPMTGKRLMDAQRVTAGYIQLWFDTYGNR</sequence>
<protein>
    <recommendedName>
        <fullName>Phospholipase C</fullName>
        <shortName>PLC</shortName>
        <ecNumber>3.1.4.3</ecNumber>
    </recommendedName>
    <alternativeName>
        <fullName>Cereolysin A</fullName>
    </alternativeName>
    <alternativeName>
        <fullName>Phosphatidylcholine cholinephosphohydrolase</fullName>
    </alternativeName>
</protein>
<comment type="function">
    <text>Required, with sphingomyelinase, to effect target cell lysis (hemolysis).</text>
</comment>
<comment type="catalytic activity">
    <reaction>
        <text>a 1,2-diacyl-sn-glycero-3-phosphocholine + H2O = phosphocholine + a 1,2-diacyl-sn-glycerol + H(+)</text>
        <dbReference type="Rhea" id="RHEA:10604"/>
        <dbReference type="ChEBI" id="CHEBI:15377"/>
        <dbReference type="ChEBI" id="CHEBI:15378"/>
        <dbReference type="ChEBI" id="CHEBI:17815"/>
        <dbReference type="ChEBI" id="CHEBI:57643"/>
        <dbReference type="ChEBI" id="CHEBI:295975"/>
        <dbReference type="EC" id="3.1.4.3"/>
    </reaction>
</comment>
<comment type="cofactor">
    <cofactor>
        <name>Zn(2+)</name>
        <dbReference type="ChEBI" id="CHEBI:29105"/>
    </cofactor>
    <text>Binds 3 Zn(2+) ions per subunit.</text>
</comment>
<comment type="subunit">
    <text>Monomer.</text>
</comment>
<comment type="similarity">
    <text evidence="3">Belongs to the bacterial zinc-metallophospholipase C family.</text>
</comment>
<organism>
    <name type="scientific">Bacillus cereus</name>
    <dbReference type="NCBI Taxonomy" id="1396"/>
    <lineage>
        <taxon>Bacteria</taxon>
        <taxon>Bacillati</taxon>
        <taxon>Bacillota</taxon>
        <taxon>Bacilli</taxon>
        <taxon>Bacillales</taxon>
        <taxon>Bacillaceae</taxon>
        <taxon>Bacillus</taxon>
        <taxon>Bacillus cereus group</taxon>
    </lineage>
</organism>